<protein>
    <recommendedName>
        <fullName evidence="1">Hydroxyacylglutathione hydrolase</fullName>
        <ecNumber evidence="1">3.1.2.6</ecNumber>
    </recommendedName>
    <alternativeName>
        <fullName evidence="1">Glyoxalase II</fullName>
        <shortName evidence="1">Glx II</shortName>
    </alternativeName>
</protein>
<accession>Q8YZ99</accession>
<evidence type="ECO:0000255" key="1">
    <source>
        <dbReference type="HAMAP-Rule" id="MF_01374"/>
    </source>
</evidence>
<reference key="1">
    <citation type="journal article" date="2001" name="DNA Res.">
        <title>Complete genomic sequence of the filamentous nitrogen-fixing cyanobacterium Anabaena sp. strain PCC 7120.</title>
        <authorList>
            <person name="Kaneko T."/>
            <person name="Nakamura Y."/>
            <person name="Wolk C.P."/>
            <person name="Kuritz T."/>
            <person name="Sasamoto S."/>
            <person name="Watanabe A."/>
            <person name="Iriguchi M."/>
            <person name="Ishikawa A."/>
            <person name="Kawashima K."/>
            <person name="Kimura T."/>
            <person name="Kishida Y."/>
            <person name="Kohara M."/>
            <person name="Matsumoto M."/>
            <person name="Matsuno A."/>
            <person name="Muraki A."/>
            <person name="Nakazaki N."/>
            <person name="Shimpo S."/>
            <person name="Sugimoto M."/>
            <person name="Takazawa M."/>
            <person name="Yamada M."/>
            <person name="Yasuda M."/>
            <person name="Tabata S."/>
        </authorList>
    </citation>
    <scope>NUCLEOTIDE SEQUENCE [LARGE SCALE GENOMIC DNA]</scope>
    <source>
        <strain>PCC 7120 / SAG 25.82 / UTEX 2576</strain>
    </source>
</reference>
<dbReference type="EC" id="3.1.2.6" evidence="1"/>
<dbReference type="EMBL" id="BA000019">
    <property type="protein sequence ID" value="BAB72538.1"/>
    <property type="molecule type" value="Genomic_DNA"/>
</dbReference>
<dbReference type="PIR" id="AC1879">
    <property type="entry name" value="AC1879"/>
</dbReference>
<dbReference type="RefSeq" id="WP_010994756.1">
    <property type="nucleotide sequence ID" value="NZ_RSCN01000009.1"/>
</dbReference>
<dbReference type="SMR" id="Q8YZ99"/>
<dbReference type="STRING" id="103690.gene:10492591"/>
<dbReference type="KEGG" id="ana:all0580"/>
<dbReference type="eggNOG" id="COG0491">
    <property type="taxonomic scope" value="Bacteria"/>
</dbReference>
<dbReference type="OrthoDB" id="9802897at2"/>
<dbReference type="BRENDA" id="3.1.2.6">
    <property type="organism ID" value="8113"/>
</dbReference>
<dbReference type="UniPathway" id="UPA00619">
    <property type="reaction ID" value="UER00676"/>
</dbReference>
<dbReference type="Proteomes" id="UP000002483">
    <property type="component" value="Chromosome"/>
</dbReference>
<dbReference type="GO" id="GO:0004416">
    <property type="term" value="F:hydroxyacylglutathione hydrolase activity"/>
    <property type="evidence" value="ECO:0007669"/>
    <property type="project" value="UniProtKB-UniRule"/>
</dbReference>
<dbReference type="GO" id="GO:0046872">
    <property type="term" value="F:metal ion binding"/>
    <property type="evidence" value="ECO:0007669"/>
    <property type="project" value="UniProtKB-KW"/>
</dbReference>
<dbReference type="GO" id="GO:0019243">
    <property type="term" value="P:methylglyoxal catabolic process to D-lactate via S-lactoyl-glutathione"/>
    <property type="evidence" value="ECO:0007669"/>
    <property type="project" value="InterPro"/>
</dbReference>
<dbReference type="CDD" id="cd07723">
    <property type="entry name" value="hydroxyacylglutathione_hydrolase_MBL-fold"/>
    <property type="match status" value="1"/>
</dbReference>
<dbReference type="Gene3D" id="3.60.15.10">
    <property type="entry name" value="Ribonuclease Z/Hydroxyacylglutathione hydrolase-like"/>
    <property type="match status" value="1"/>
</dbReference>
<dbReference type="HAMAP" id="MF_01374">
    <property type="entry name" value="Glyoxalase_2"/>
    <property type="match status" value="1"/>
</dbReference>
<dbReference type="InterPro" id="IPR035680">
    <property type="entry name" value="Clx_II_MBL"/>
</dbReference>
<dbReference type="InterPro" id="IPR050110">
    <property type="entry name" value="Glyoxalase_II_hydrolase"/>
</dbReference>
<dbReference type="InterPro" id="IPR032282">
    <property type="entry name" value="HAGH_C"/>
</dbReference>
<dbReference type="InterPro" id="IPR017782">
    <property type="entry name" value="Hydroxyacylglutathione_Hdrlase"/>
</dbReference>
<dbReference type="InterPro" id="IPR001279">
    <property type="entry name" value="Metallo-B-lactamas"/>
</dbReference>
<dbReference type="InterPro" id="IPR036866">
    <property type="entry name" value="RibonucZ/Hydroxyglut_hydro"/>
</dbReference>
<dbReference type="NCBIfam" id="TIGR03413">
    <property type="entry name" value="GSH_gloB"/>
    <property type="match status" value="1"/>
</dbReference>
<dbReference type="PANTHER" id="PTHR43705">
    <property type="entry name" value="HYDROXYACYLGLUTATHIONE HYDROLASE"/>
    <property type="match status" value="1"/>
</dbReference>
<dbReference type="PANTHER" id="PTHR43705:SF1">
    <property type="entry name" value="HYDROXYACYLGLUTATHIONE HYDROLASE GLOB"/>
    <property type="match status" value="1"/>
</dbReference>
<dbReference type="Pfam" id="PF16123">
    <property type="entry name" value="HAGH_C"/>
    <property type="match status" value="1"/>
</dbReference>
<dbReference type="Pfam" id="PF00753">
    <property type="entry name" value="Lactamase_B"/>
    <property type="match status" value="1"/>
</dbReference>
<dbReference type="PIRSF" id="PIRSF005457">
    <property type="entry name" value="Glx"/>
    <property type="match status" value="1"/>
</dbReference>
<dbReference type="SMART" id="SM00849">
    <property type="entry name" value="Lactamase_B"/>
    <property type="match status" value="1"/>
</dbReference>
<dbReference type="SUPFAM" id="SSF56281">
    <property type="entry name" value="Metallo-hydrolase/oxidoreductase"/>
    <property type="match status" value="1"/>
</dbReference>
<comment type="function">
    <text evidence="1">Thiolesterase that catalyzes the hydrolysis of S-D-lactoyl-glutathione to form glutathione and D-lactic acid.</text>
</comment>
<comment type="catalytic activity">
    <reaction evidence="1">
        <text>an S-(2-hydroxyacyl)glutathione + H2O = a 2-hydroxy carboxylate + glutathione + H(+)</text>
        <dbReference type="Rhea" id="RHEA:21864"/>
        <dbReference type="ChEBI" id="CHEBI:15377"/>
        <dbReference type="ChEBI" id="CHEBI:15378"/>
        <dbReference type="ChEBI" id="CHEBI:57925"/>
        <dbReference type="ChEBI" id="CHEBI:58896"/>
        <dbReference type="ChEBI" id="CHEBI:71261"/>
        <dbReference type="EC" id="3.1.2.6"/>
    </reaction>
</comment>
<comment type="cofactor">
    <cofactor evidence="1">
        <name>Zn(2+)</name>
        <dbReference type="ChEBI" id="CHEBI:29105"/>
    </cofactor>
    <text evidence="1">Binds 2 Zn(2+) ions per subunit.</text>
</comment>
<comment type="pathway">
    <text evidence="1">Secondary metabolite metabolism; methylglyoxal degradation; (R)-lactate from methylglyoxal: step 2/2.</text>
</comment>
<comment type="subunit">
    <text evidence="1">Monomer.</text>
</comment>
<comment type="similarity">
    <text evidence="1">Belongs to the metallo-beta-lactamase superfamily. Glyoxalase II family.</text>
</comment>
<gene>
    <name evidence="1" type="primary">gloB</name>
    <name type="ordered locus">all0580</name>
</gene>
<sequence length="257" mass="28721">MQVIRLAALSDNYIFLLHDSHKNIAAVVDPAEAEPVLKQLAQLKAELVAIFNTHHHNDHVGGNQKLIQKFPQVKVYGGAKDQGRIPGQQVFLQPGDRVQFADRVAEVIFVPGHTRAHIAYYFPPQTDDTPGELFCGDTLFAGGCGRLFEGTPAQMVESLTKLRSLPENTRVWCAHEYTLKNLQFALSVDSKNTELQKRLDEVKTKRSQGIATVPSLLGVEKLTNPFLRWEQPSLQLAVNSNDPVQTFARIRGLKDKF</sequence>
<organism>
    <name type="scientific">Nostoc sp. (strain PCC 7120 / SAG 25.82 / UTEX 2576)</name>
    <dbReference type="NCBI Taxonomy" id="103690"/>
    <lineage>
        <taxon>Bacteria</taxon>
        <taxon>Bacillati</taxon>
        <taxon>Cyanobacteriota</taxon>
        <taxon>Cyanophyceae</taxon>
        <taxon>Nostocales</taxon>
        <taxon>Nostocaceae</taxon>
        <taxon>Nostoc</taxon>
    </lineage>
</organism>
<keyword id="KW-0378">Hydrolase</keyword>
<keyword id="KW-0479">Metal-binding</keyword>
<keyword id="KW-1185">Reference proteome</keyword>
<keyword id="KW-0862">Zinc</keyword>
<proteinExistence type="inferred from homology"/>
<feature type="chain" id="PRO_1000068206" description="Hydroxyacylglutathione hydrolase">
    <location>
        <begin position="1"/>
        <end position="257"/>
    </location>
</feature>
<feature type="binding site" evidence="1">
    <location>
        <position position="54"/>
    </location>
    <ligand>
        <name>Zn(2+)</name>
        <dbReference type="ChEBI" id="CHEBI:29105"/>
        <label>1</label>
    </ligand>
</feature>
<feature type="binding site" evidence="1">
    <location>
        <position position="56"/>
    </location>
    <ligand>
        <name>Zn(2+)</name>
        <dbReference type="ChEBI" id="CHEBI:29105"/>
        <label>1</label>
    </ligand>
</feature>
<feature type="binding site" evidence="1">
    <location>
        <position position="58"/>
    </location>
    <ligand>
        <name>Zn(2+)</name>
        <dbReference type="ChEBI" id="CHEBI:29105"/>
        <label>2</label>
    </ligand>
</feature>
<feature type="binding site" evidence="1">
    <location>
        <position position="59"/>
    </location>
    <ligand>
        <name>Zn(2+)</name>
        <dbReference type="ChEBI" id="CHEBI:29105"/>
        <label>2</label>
    </ligand>
</feature>
<feature type="binding site" evidence="1">
    <location>
        <position position="113"/>
    </location>
    <ligand>
        <name>Zn(2+)</name>
        <dbReference type="ChEBI" id="CHEBI:29105"/>
        <label>1</label>
    </ligand>
</feature>
<feature type="binding site" evidence="1">
    <location>
        <position position="137"/>
    </location>
    <ligand>
        <name>Zn(2+)</name>
        <dbReference type="ChEBI" id="CHEBI:29105"/>
        <label>1</label>
    </ligand>
</feature>
<feature type="binding site" evidence="1">
    <location>
        <position position="137"/>
    </location>
    <ligand>
        <name>Zn(2+)</name>
        <dbReference type="ChEBI" id="CHEBI:29105"/>
        <label>2</label>
    </ligand>
</feature>
<feature type="binding site" evidence="1">
    <location>
        <position position="175"/>
    </location>
    <ligand>
        <name>Zn(2+)</name>
        <dbReference type="ChEBI" id="CHEBI:29105"/>
        <label>2</label>
    </ligand>
</feature>
<name>GLO2_NOSS1</name>